<keyword id="KW-0045">Antibiotic biosynthesis</keyword>
<keyword id="KW-0520">NAD</keyword>
<keyword id="KW-0560">Oxidoreductase</keyword>
<accession>P16543</accession>
<reference key="1">
    <citation type="journal article" date="1989" name="EMBO J.">
        <title>Structure and deduced function of the granaticin-producing polyketide synthase gene cluster of Streptomyces violaceoruber Tu22.</title>
        <authorList>
            <person name="Sherman D.H."/>
            <person name="Malpartida F."/>
            <person name="Bibb M.J."/>
            <person name="Kieser H.M."/>
            <person name="Bibb M.J."/>
            <person name="Hopwood D.A."/>
        </authorList>
    </citation>
    <scope>NUCLEOTIDE SEQUENCE [GENOMIC DNA]</scope>
    <source>
        <strain>Tu22</strain>
    </source>
</reference>
<reference key="2">
    <citation type="journal article" date="1998" name="Chem. Biol.">
        <title>The granaticin biosynthetic gene cluster of Streptomyces violaceoruber Tu22: sequence analysis and expression in a heterologous host.</title>
        <authorList>
            <person name="Ichinose K."/>
            <person name="Bedford D.J."/>
            <person name="Tornus D."/>
            <person name="Bechthold A."/>
            <person name="Bibb M.J."/>
            <person name="Revill W.P."/>
            <person name="Floss H.G."/>
            <person name="Hopwood D.A."/>
        </authorList>
    </citation>
    <scope>NUCLEOTIDE SEQUENCE [GENOMIC DNA]</scope>
    <source>
        <strain>Tu22</strain>
    </source>
</reference>
<gene>
    <name type="primary">gra-orf6</name>
</gene>
<comment type="pathway">
    <text>Antibiotic biosynthesis; granaticin biosynthesis.</text>
</comment>
<comment type="similarity">
    <text evidence="2">Belongs to the short-chain dehydrogenases/reductases (SDR) family.</text>
</comment>
<evidence type="ECO:0000250" key="1"/>
<evidence type="ECO:0000305" key="2"/>
<protein>
    <recommendedName>
        <fullName>Granaticin polyketide synthase putative ketoacyl reductase 2</fullName>
        <ecNumber>1.3.1.-</ecNumber>
    </recommendedName>
    <alternativeName>
        <fullName>ORF6</fullName>
    </alternativeName>
</protein>
<name>DHK2_STRVN</name>
<sequence>MATDAPEAPVALVTGSSSGIGQTVAQRLAAEGYRVVVNSARSVEDGEKTAAALPDALYVRADVSEEADARRLVDTAVEHYGRLDVLVNNAGRTRAIPHADLAAATPEVWREILGLNVIGTWQTTVAAMPHLARSGNGSVVNVSSIAGSRPAGSSIPYAVSNGGHRAQTRLLANTVGPAVRVNAVAPGLIETPWTQNSDFFAPIAEHVRQTTPLRRTGRPEDVAEAVLGLVRATYTTGQVLLVDGGAHLL</sequence>
<feature type="chain" id="PRO_0000054633" description="Granaticin polyketide synthase putative ketoacyl reductase 2">
    <location>
        <begin position="1"/>
        <end position="249"/>
    </location>
</feature>
<feature type="active site" description="Proton acceptor" evidence="1">
    <location>
        <position position="157"/>
    </location>
</feature>
<feature type="binding site" evidence="1">
    <location>
        <begin position="12"/>
        <end position="36"/>
    </location>
    <ligand>
        <name>NAD(+)</name>
        <dbReference type="ChEBI" id="CHEBI:57540"/>
    </ligand>
</feature>
<feature type="binding site" evidence="1">
    <location>
        <position position="144"/>
    </location>
    <ligand>
        <name>substrate</name>
    </ligand>
</feature>
<dbReference type="EC" id="1.3.1.-"/>
<dbReference type="EMBL" id="X16300">
    <property type="protein sequence ID" value="CAA34367.1"/>
    <property type="molecule type" value="Genomic_DNA"/>
</dbReference>
<dbReference type="EMBL" id="X16144">
    <property type="protein sequence ID" value="CAA34262.1"/>
    <property type="molecule type" value="Genomic_DNA"/>
</dbReference>
<dbReference type="EMBL" id="AJ011500">
    <property type="protein sequence ID" value="CAA09651.1"/>
    <property type="molecule type" value="Genomic_DNA"/>
</dbReference>
<dbReference type="PIR" id="S05398">
    <property type="entry name" value="S05398"/>
</dbReference>
<dbReference type="SMR" id="P16543"/>
<dbReference type="UniPathway" id="UPA00175"/>
<dbReference type="GO" id="GO:0016491">
    <property type="term" value="F:oxidoreductase activity"/>
    <property type="evidence" value="ECO:0007669"/>
    <property type="project" value="UniProtKB-KW"/>
</dbReference>
<dbReference type="GO" id="GO:0017000">
    <property type="term" value="P:antibiotic biosynthetic process"/>
    <property type="evidence" value="ECO:0007669"/>
    <property type="project" value="UniProtKB-KW"/>
</dbReference>
<dbReference type="CDD" id="cd05233">
    <property type="entry name" value="SDR_c"/>
    <property type="match status" value="1"/>
</dbReference>
<dbReference type="FunFam" id="3.40.50.720:FF:000084">
    <property type="entry name" value="Short-chain dehydrogenase reductase"/>
    <property type="match status" value="1"/>
</dbReference>
<dbReference type="Gene3D" id="3.40.50.720">
    <property type="entry name" value="NAD(P)-binding Rossmann-like Domain"/>
    <property type="match status" value="1"/>
</dbReference>
<dbReference type="InterPro" id="IPR036291">
    <property type="entry name" value="NAD(P)-bd_dom_sf"/>
</dbReference>
<dbReference type="InterPro" id="IPR002347">
    <property type="entry name" value="SDR_fam"/>
</dbReference>
<dbReference type="PANTHER" id="PTHR43639">
    <property type="entry name" value="OXIDOREDUCTASE, SHORT-CHAIN DEHYDROGENASE/REDUCTASE FAMILY (AFU_ORTHOLOGUE AFUA_5G02870)"/>
    <property type="match status" value="1"/>
</dbReference>
<dbReference type="PANTHER" id="PTHR43639:SF1">
    <property type="entry name" value="SHORT-CHAIN DEHYDROGENASE_REDUCTASE FAMILY PROTEIN"/>
    <property type="match status" value="1"/>
</dbReference>
<dbReference type="Pfam" id="PF13561">
    <property type="entry name" value="adh_short_C2"/>
    <property type="match status" value="1"/>
</dbReference>
<dbReference type="PRINTS" id="PR00081">
    <property type="entry name" value="GDHRDH"/>
</dbReference>
<dbReference type="PRINTS" id="PR00080">
    <property type="entry name" value="SDRFAMILY"/>
</dbReference>
<dbReference type="SUPFAM" id="SSF51735">
    <property type="entry name" value="NAD(P)-binding Rossmann-fold domains"/>
    <property type="match status" value="1"/>
</dbReference>
<proteinExistence type="inferred from homology"/>
<organism>
    <name type="scientific">Streptomyces violaceoruber</name>
    <dbReference type="NCBI Taxonomy" id="1935"/>
    <lineage>
        <taxon>Bacteria</taxon>
        <taxon>Bacillati</taxon>
        <taxon>Actinomycetota</taxon>
        <taxon>Actinomycetes</taxon>
        <taxon>Kitasatosporales</taxon>
        <taxon>Streptomycetaceae</taxon>
        <taxon>Streptomyces</taxon>
        <taxon>Streptomyces violaceoruber group</taxon>
    </lineage>
</organism>